<reference key="1">
    <citation type="submission" date="2006-02" db="EMBL/GenBank/DDBJ databases">
        <title>Complete sequence of chromosome of Jannaschia sp. CCS1.</title>
        <authorList>
            <consortium name="US DOE Joint Genome Institute"/>
            <person name="Copeland A."/>
            <person name="Lucas S."/>
            <person name="Lapidus A."/>
            <person name="Barry K."/>
            <person name="Detter J.C."/>
            <person name="Glavina del Rio T."/>
            <person name="Hammon N."/>
            <person name="Israni S."/>
            <person name="Pitluck S."/>
            <person name="Brettin T."/>
            <person name="Bruce D."/>
            <person name="Han C."/>
            <person name="Tapia R."/>
            <person name="Gilna P."/>
            <person name="Chertkov O."/>
            <person name="Saunders E."/>
            <person name="Schmutz J."/>
            <person name="Larimer F."/>
            <person name="Land M."/>
            <person name="Kyrpides N."/>
            <person name="Lykidis A."/>
            <person name="Moran M.A."/>
            <person name="Belas R."/>
            <person name="Ye W."/>
            <person name="Buchan A."/>
            <person name="Gonzalez J.M."/>
            <person name="Schell M.A."/>
            <person name="Richardson P."/>
        </authorList>
    </citation>
    <scope>NUCLEOTIDE SEQUENCE [LARGE SCALE GENOMIC DNA]</scope>
    <source>
        <strain>CCS1</strain>
    </source>
</reference>
<protein>
    <recommendedName>
        <fullName evidence="1">3-phosphoshikimate 1-carboxyvinyltransferase</fullName>
        <ecNumber evidence="1">2.5.1.19</ecNumber>
    </recommendedName>
    <alternativeName>
        <fullName evidence="1">5-enolpyruvylshikimate-3-phosphate synthase</fullName>
        <shortName evidence="1">EPSP synthase</shortName>
        <shortName evidence="1">EPSPS</shortName>
    </alternativeName>
</protein>
<name>AROA_JANSC</name>
<organism>
    <name type="scientific">Jannaschia sp. (strain CCS1)</name>
    <dbReference type="NCBI Taxonomy" id="290400"/>
    <lineage>
        <taxon>Bacteria</taxon>
        <taxon>Pseudomonadati</taxon>
        <taxon>Pseudomonadota</taxon>
        <taxon>Alphaproteobacteria</taxon>
        <taxon>Rhodobacterales</taxon>
        <taxon>Roseobacteraceae</taxon>
        <taxon>Jannaschia</taxon>
    </lineage>
</organism>
<sequence length="450" mass="47050">MSAHGDPKPMTARKGGALTGTAEVPGDKSISHRSLIFGAMAVGETRVTGLLEGQDVLDTASAMRAFGAEVAREDDGTWSIHGVGVGGFVEPDDVLDCGNSGTGVRLLMGAMATTPISVTFTGDASLRSRPMARVTDPLALFGTRAYGRAQGRLPMTLVGAEAPMPVRYATPVPSAQVKSAVLLAGLNAPGETVVIEAEATRDHSERMLAGFGAQISTEVTQEGRVITLTGQPELTPQVIAVPRDPSSAAFPVCAAIITEGSDVLVPNIGLNPTRAGLFETLRDMGADLTYENPREEGGEPVADLRAKFSPDMKGIEVPPERAASMIDEYPILSVVAANAEGTTVMRGVKELRVKESDRIAAMADGLRLNGIEVEDGPDWWIVHGRGPGGMAGGATVATHLDHRIAMSFLCAGFASQQGITIDDSGPIATSFPIFEPLMRDLGARLDRANA</sequence>
<gene>
    <name evidence="1" type="primary">aroA</name>
    <name type="ordered locus">Jann_0708</name>
</gene>
<dbReference type="EC" id="2.5.1.19" evidence="1"/>
<dbReference type="EMBL" id="CP000264">
    <property type="protein sequence ID" value="ABD53625.1"/>
    <property type="molecule type" value="Genomic_DNA"/>
</dbReference>
<dbReference type="RefSeq" id="WP_011453833.1">
    <property type="nucleotide sequence ID" value="NC_007802.1"/>
</dbReference>
<dbReference type="SMR" id="Q28UI7"/>
<dbReference type="STRING" id="290400.Jann_0708"/>
<dbReference type="KEGG" id="jan:Jann_0708"/>
<dbReference type="eggNOG" id="COG0128">
    <property type="taxonomic scope" value="Bacteria"/>
</dbReference>
<dbReference type="HOGENOM" id="CLU_024321_0_1_5"/>
<dbReference type="OrthoDB" id="9809920at2"/>
<dbReference type="UniPathway" id="UPA00053">
    <property type="reaction ID" value="UER00089"/>
</dbReference>
<dbReference type="Proteomes" id="UP000008326">
    <property type="component" value="Chromosome"/>
</dbReference>
<dbReference type="GO" id="GO:0005737">
    <property type="term" value="C:cytoplasm"/>
    <property type="evidence" value="ECO:0007669"/>
    <property type="project" value="UniProtKB-SubCell"/>
</dbReference>
<dbReference type="GO" id="GO:0003866">
    <property type="term" value="F:3-phosphoshikimate 1-carboxyvinyltransferase activity"/>
    <property type="evidence" value="ECO:0007669"/>
    <property type="project" value="UniProtKB-UniRule"/>
</dbReference>
<dbReference type="GO" id="GO:0008652">
    <property type="term" value="P:amino acid biosynthetic process"/>
    <property type="evidence" value="ECO:0007669"/>
    <property type="project" value="UniProtKB-KW"/>
</dbReference>
<dbReference type="GO" id="GO:0009073">
    <property type="term" value="P:aromatic amino acid family biosynthetic process"/>
    <property type="evidence" value="ECO:0007669"/>
    <property type="project" value="UniProtKB-KW"/>
</dbReference>
<dbReference type="GO" id="GO:0009423">
    <property type="term" value="P:chorismate biosynthetic process"/>
    <property type="evidence" value="ECO:0007669"/>
    <property type="project" value="UniProtKB-UniRule"/>
</dbReference>
<dbReference type="CDD" id="cd01556">
    <property type="entry name" value="EPSP_synthase"/>
    <property type="match status" value="1"/>
</dbReference>
<dbReference type="FunFam" id="3.65.10.10:FF:000005">
    <property type="entry name" value="3-phosphoshikimate 1-carboxyvinyltransferase"/>
    <property type="match status" value="1"/>
</dbReference>
<dbReference type="Gene3D" id="3.65.10.10">
    <property type="entry name" value="Enolpyruvate transferase domain"/>
    <property type="match status" value="2"/>
</dbReference>
<dbReference type="HAMAP" id="MF_00210">
    <property type="entry name" value="EPSP_synth"/>
    <property type="match status" value="1"/>
</dbReference>
<dbReference type="InterPro" id="IPR001986">
    <property type="entry name" value="Enolpyruvate_Tfrase_dom"/>
</dbReference>
<dbReference type="InterPro" id="IPR036968">
    <property type="entry name" value="Enolpyruvate_Tfrase_sf"/>
</dbReference>
<dbReference type="InterPro" id="IPR006264">
    <property type="entry name" value="EPSP_synthase"/>
</dbReference>
<dbReference type="InterPro" id="IPR023193">
    <property type="entry name" value="EPSP_synthase_CS"/>
</dbReference>
<dbReference type="InterPro" id="IPR013792">
    <property type="entry name" value="RNA3'P_cycl/enolpyr_Trfase_a/b"/>
</dbReference>
<dbReference type="NCBIfam" id="TIGR01356">
    <property type="entry name" value="aroA"/>
    <property type="match status" value="1"/>
</dbReference>
<dbReference type="PANTHER" id="PTHR21090">
    <property type="entry name" value="AROM/DEHYDROQUINATE SYNTHASE"/>
    <property type="match status" value="1"/>
</dbReference>
<dbReference type="PANTHER" id="PTHR21090:SF5">
    <property type="entry name" value="PENTAFUNCTIONAL AROM POLYPEPTIDE"/>
    <property type="match status" value="1"/>
</dbReference>
<dbReference type="Pfam" id="PF00275">
    <property type="entry name" value="EPSP_synthase"/>
    <property type="match status" value="1"/>
</dbReference>
<dbReference type="PIRSF" id="PIRSF000505">
    <property type="entry name" value="EPSPS"/>
    <property type="match status" value="1"/>
</dbReference>
<dbReference type="SUPFAM" id="SSF55205">
    <property type="entry name" value="EPT/RTPC-like"/>
    <property type="match status" value="1"/>
</dbReference>
<dbReference type="PROSITE" id="PS00104">
    <property type="entry name" value="EPSP_SYNTHASE_1"/>
    <property type="match status" value="1"/>
</dbReference>
<dbReference type="PROSITE" id="PS00885">
    <property type="entry name" value="EPSP_SYNTHASE_2"/>
    <property type="match status" value="1"/>
</dbReference>
<accession>Q28UI7</accession>
<feature type="chain" id="PRO_1000058601" description="3-phosphoshikimate 1-carboxyvinyltransferase">
    <location>
        <begin position="1"/>
        <end position="450"/>
    </location>
</feature>
<feature type="region of interest" description="Disordered" evidence="2">
    <location>
        <begin position="1"/>
        <end position="25"/>
    </location>
</feature>
<feature type="active site" description="Proton acceptor" evidence="1">
    <location>
        <position position="327"/>
    </location>
</feature>
<feature type="binding site" evidence="1">
    <location>
        <position position="28"/>
    </location>
    <ligand>
        <name>3-phosphoshikimate</name>
        <dbReference type="ChEBI" id="CHEBI:145989"/>
    </ligand>
</feature>
<feature type="binding site" evidence="1">
    <location>
        <position position="28"/>
    </location>
    <ligand>
        <name>phosphoenolpyruvate</name>
        <dbReference type="ChEBI" id="CHEBI:58702"/>
    </ligand>
</feature>
<feature type="binding site" evidence="1">
    <location>
        <position position="29"/>
    </location>
    <ligand>
        <name>3-phosphoshikimate</name>
        <dbReference type="ChEBI" id="CHEBI:145989"/>
    </ligand>
</feature>
<feature type="binding site" evidence="1">
    <location>
        <position position="33"/>
    </location>
    <ligand>
        <name>3-phosphoshikimate</name>
        <dbReference type="ChEBI" id="CHEBI:145989"/>
    </ligand>
</feature>
<feature type="binding site" evidence="1">
    <location>
        <position position="101"/>
    </location>
    <ligand>
        <name>phosphoenolpyruvate</name>
        <dbReference type="ChEBI" id="CHEBI:58702"/>
    </ligand>
</feature>
<feature type="binding site" evidence="1">
    <location>
        <position position="129"/>
    </location>
    <ligand>
        <name>phosphoenolpyruvate</name>
        <dbReference type="ChEBI" id="CHEBI:58702"/>
    </ligand>
</feature>
<feature type="binding site" evidence="1">
    <location>
        <position position="174"/>
    </location>
    <ligand>
        <name>3-phosphoshikimate</name>
        <dbReference type="ChEBI" id="CHEBI:145989"/>
    </ligand>
</feature>
<feature type="binding site" evidence="1">
    <location>
        <position position="176"/>
    </location>
    <ligand>
        <name>3-phosphoshikimate</name>
        <dbReference type="ChEBI" id="CHEBI:145989"/>
    </ligand>
</feature>
<feature type="binding site" evidence="1">
    <location>
        <position position="176"/>
    </location>
    <ligand>
        <name>phosphoenolpyruvate</name>
        <dbReference type="ChEBI" id="CHEBI:58702"/>
    </ligand>
</feature>
<feature type="binding site" evidence="1">
    <location>
        <position position="327"/>
    </location>
    <ligand>
        <name>3-phosphoshikimate</name>
        <dbReference type="ChEBI" id="CHEBI:145989"/>
    </ligand>
</feature>
<feature type="binding site" evidence="1">
    <location>
        <position position="354"/>
    </location>
    <ligand>
        <name>3-phosphoshikimate</name>
        <dbReference type="ChEBI" id="CHEBI:145989"/>
    </ligand>
</feature>
<feature type="binding site" evidence="1">
    <location>
        <position position="358"/>
    </location>
    <ligand>
        <name>phosphoenolpyruvate</name>
        <dbReference type="ChEBI" id="CHEBI:58702"/>
    </ligand>
</feature>
<feature type="binding site" evidence="1">
    <location>
        <position position="403"/>
    </location>
    <ligand>
        <name>phosphoenolpyruvate</name>
        <dbReference type="ChEBI" id="CHEBI:58702"/>
    </ligand>
</feature>
<keyword id="KW-0028">Amino-acid biosynthesis</keyword>
<keyword id="KW-0057">Aromatic amino acid biosynthesis</keyword>
<keyword id="KW-0963">Cytoplasm</keyword>
<keyword id="KW-1185">Reference proteome</keyword>
<keyword id="KW-0808">Transferase</keyword>
<proteinExistence type="inferred from homology"/>
<evidence type="ECO:0000255" key="1">
    <source>
        <dbReference type="HAMAP-Rule" id="MF_00210"/>
    </source>
</evidence>
<evidence type="ECO:0000256" key="2">
    <source>
        <dbReference type="SAM" id="MobiDB-lite"/>
    </source>
</evidence>
<comment type="function">
    <text evidence="1">Catalyzes the transfer of the enolpyruvyl moiety of phosphoenolpyruvate (PEP) to the 5-hydroxyl of shikimate-3-phosphate (S3P) to produce enolpyruvyl shikimate-3-phosphate and inorganic phosphate.</text>
</comment>
<comment type="catalytic activity">
    <reaction evidence="1">
        <text>3-phosphoshikimate + phosphoenolpyruvate = 5-O-(1-carboxyvinyl)-3-phosphoshikimate + phosphate</text>
        <dbReference type="Rhea" id="RHEA:21256"/>
        <dbReference type="ChEBI" id="CHEBI:43474"/>
        <dbReference type="ChEBI" id="CHEBI:57701"/>
        <dbReference type="ChEBI" id="CHEBI:58702"/>
        <dbReference type="ChEBI" id="CHEBI:145989"/>
        <dbReference type="EC" id="2.5.1.19"/>
    </reaction>
    <physiologicalReaction direction="left-to-right" evidence="1">
        <dbReference type="Rhea" id="RHEA:21257"/>
    </physiologicalReaction>
</comment>
<comment type="pathway">
    <text evidence="1">Metabolic intermediate biosynthesis; chorismate biosynthesis; chorismate from D-erythrose 4-phosphate and phosphoenolpyruvate: step 6/7.</text>
</comment>
<comment type="subunit">
    <text evidence="1">Monomer.</text>
</comment>
<comment type="subcellular location">
    <subcellularLocation>
        <location evidence="1">Cytoplasm</location>
    </subcellularLocation>
</comment>
<comment type="similarity">
    <text evidence="1">Belongs to the EPSP synthase family.</text>
</comment>